<keyword id="KW-0067">ATP-binding</keyword>
<keyword id="KW-0963">Cytoplasm</keyword>
<keyword id="KW-0418">Kinase</keyword>
<keyword id="KW-0460">Magnesium</keyword>
<keyword id="KW-0479">Metal-binding</keyword>
<keyword id="KW-0545">Nucleotide biosynthesis</keyword>
<keyword id="KW-0547">Nucleotide-binding</keyword>
<keyword id="KW-1185">Reference proteome</keyword>
<keyword id="KW-0808">Transferase</keyword>
<proteinExistence type="inferred from homology"/>
<gene>
    <name evidence="1" type="primary">prs</name>
    <name type="synonym">prsA</name>
    <name type="ordered locus">BU169</name>
</gene>
<accession>P57266</accession>
<protein>
    <recommendedName>
        <fullName evidence="1">Ribose-phosphate pyrophosphokinase</fullName>
        <shortName evidence="1">RPPK</shortName>
        <ecNumber evidence="1">2.7.6.1</ecNumber>
    </recommendedName>
    <alternativeName>
        <fullName evidence="1">5-phospho-D-ribosyl alpha-1-diphosphate synthase</fullName>
    </alternativeName>
    <alternativeName>
        <fullName evidence="1">Phosphoribosyl diphosphate synthase</fullName>
    </alternativeName>
    <alternativeName>
        <fullName evidence="1">Phosphoribosyl pyrophosphate synthase</fullName>
        <shortName evidence="1">P-Rib-PP synthase</shortName>
        <shortName evidence="1">PRPP synthase</shortName>
        <shortName evidence="1">PRPPase</shortName>
    </alternativeName>
</protein>
<name>KPRS_BUCAI</name>
<comment type="function">
    <text evidence="1">Involved in the biosynthesis of the central metabolite phospho-alpha-D-ribosyl-1-pyrophosphate (PRPP) via the transfer of pyrophosphoryl group from ATP to 1-hydroxyl of ribose-5-phosphate (Rib-5-P).</text>
</comment>
<comment type="catalytic activity">
    <reaction evidence="1">
        <text>D-ribose 5-phosphate + ATP = 5-phospho-alpha-D-ribose 1-diphosphate + AMP + H(+)</text>
        <dbReference type="Rhea" id="RHEA:15609"/>
        <dbReference type="ChEBI" id="CHEBI:15378"/>
        <dbReference type="ChEBI" id="CHEBI:30616"/>
        <dbReference type="ChEBI" id="CHEBI:58017"/>
        <dbReference type="ChEBI" id="CHEBI:78346"/>
        <dbReference type="ChEBI" id="CHEBI:456215"/>
        <dbReference type="EC" id="2.7.6.1"/>
    </reaction>
</comment>
<comment type="cofactor">
    <cofactor evidence="1">
        <name>Mg(2+)</name>
        <dbReference type="ChEBI" id="CHEBI:18420"/>
    </cofactor>
    <text evidence="1">Binds 2 Mg(2+) ions per subunit.</text>
</comment>
<comment type="pathway">
    <text evidence="1">Metabolic intermediate biosynthesis; 5-phospho-alpha-D-ribose 1-diphosphate biosynthesis; 5-phospho-alpha-D-ribose 1-diphosphate from D-ribose 5-phosphate (route I): step 1/1.</text>
</comment>
<comment type="subunit">
    <text evidence="1">Homohexamer.</text>
</comment>
<comment type="subcellular location">
    <subcellularLocation>
        <location evidence="1">Cytoplasm</location>
    </subcellularLocation>
</comment>
<comment type="similarity">
    <text evidence="1">Belongs to the ribose-phosphate pyrophosphokinase family. Class I subfamily.</text>
</comment>
<comment type="sequence caution" evidence="2">
    <conflict type="erroneous initiation">
        <sequence resource="EMBL-CDS" id="BAB12886"/>
    </conflict>
    <text>Truncated N-terminus.</text>
</comment>
<evidence type="ECO:0000255" key="1">
    <source>
        <dbReference type="HAMAP-Rule" id="MF_00583"/>
    </source>
</evidence>
<evidence type="ECO:0000305" key="2"/>
<reference key="1">
    <citation type="journal article" date="2000" name="Nature">
        <title>Genome sequence of the endocellular bacterial symbiont of aphids Buchnera sp. APS.</title>
        <authorList>
            <person name="Shigenobu S."/>
            <person name="Watanabe H."/>
            <person name="Hattori M."/>
            <person name="Sakaki Y."/>
            <person name="Ishikawa H."/>
        </authorList>
    </citation>
    <scope>NUCLEOTIDE SEQUENCE [LARGE SCALE GENOMIC DNA]</scope>
    <source>
        <strain>APS</strain>
    </source>
</reference>
<sequence length="315" mass="34620">MPDMKLFSGNSIPKLAKFIANRLYINLGKASVGRFSDGEISVQINENVRGSDVFIIQSTCSPTNDNIMELVVMVDSLRRASAGRITAVIPYFGYARQDRRVRSARVPITAKVVADFLSSIGVDRVLTVDLHAEQIQGFFDVPVDNVFGSLILLEDMLQRELKNPIVVSPDIGGVVRARAIAKLLYDTDMAIIDKRRPRANVSQIMNIIGDVANRDCILVDDMIDTGGTLCKAAEALKERGAKRVFAYATHPVFSGDAPKNLKNSVIDEVVVCDTIPLSENIELLPNVRTLTLSGMLAEAIRRISNEESISAMFEH</sequence>
<feature type="chain" id="PRO_0000141118" description="Ribose-phosphate pyrophosphokinase">
    <location>
        <begin position="1"/>
        <end position="315"/>
    </location>
</feature>
<feature type="active site" evidence="1">
    <location>
        <position position="194"/>
    </location>
</feature>
<feature type="binding site" evidence="1">
    <location>
        <begin position="37"/>
        <end position="39"/>
    </location>
    <ligand>
        <name>ATP</name>
        <dbReference type="ChEBI" id="CHEBI:30616"/>
    </ligand>
</feature>
<feature type="binding site" evidence="1">
    <location>
        <begin position="96"/>
        <end position="97"/>
    </location>
    <ligand>
        <name>ATP</name>
        <dbReference type="ChEBI" id="CHEBI:30616"/>
    </ligand>
</feature>
<feature type="binding site" evidence="1">
    <location>
        <position position="131"/>
    </location>
    <ligand>
        <name>Mg(2+)</name>
        <dbReference type="ChEBI" id="CHEBI:18420"/>
        <label>1</label>
    </ligand>
</feature>
<feature type="binding site" evidence="1">
    <location>
        <position position="170"/>
    </location>
    <ligand>
        <name>Mg(2+)</name>
        <dbReference type="ChEBI" id="CHEBI:18420"/>
        <label>2</label>
    </ligand>
</feature>
<feature type="binding site" evidence="1">
    <location>
        <position position="196"/>
    </location>
    <ligand>
        <name>D-ribose 5-phosphate</name>
        <dbReference type="ChEBI" id="CHEBI:78346"/>
    </ligand>
</feature>
<feature type="binding site" evidence="1">
    <location>
        <position position="220"/>
    </location>
    <ligand>
        <name>D-ribose 5-phosphate</name>
        <dbReference type="ChEBI" id="CHEBI:78346"/>
    </ligand>
</feature>
<feature type="binding site" evidence="1">
    <location>
        <begin position="224"/>
        <end position="228"/>
    </location>
    <ligand>
        <name>D-ribose 5-phosphate</name>
        <dbReference type="ChEBI" id="CHEBI:78346"/>
    </ligand>
</feature>
<organism>
    <name type="scientific">Buchnera aphidicola subsp. Acyrthosiphon pisum (strain APS)</name>
    <name type="common">Acyrthosiphon pisum symbiotic bacterium</name>
    <dbReference type="NCBI Taxonomy" id="107806"/>
    <lineage>
        <taxon>Bacteria</taxon>
        <taxon>Pseudomonadati</taxon>
        <taxon>Pseudomonadota</taxon>
        <taxon>Gammaproteobacteria</taxon>
        <taxon>Enterobacterales</taxon>
        <taxon>Erwiniaceae</taxon>
        <taxon>Buchnera</taxon>
    </lineage>
</organism>
<dbReference type="EC" id="2.7.6.1" evidence="1"/>
<dbReference type="EMBL" id="BA000003">
    <property type="protein sequence ID" value="BAB12886.1"/>
    <property type="status" value="ALT_INIT"/>
    <property type="molecule type" value="Genomic_DNA"/>
</dbReference>
<dbReference type="RefSeq" id="NP_240000.2">
    <property type="nucleotide sequence ID" value="NC_002528.1"/>
</dbReference>
<dbReference type="RefSeq" id="WP_009874126.1">
    <property type="nucleotide sequence ID" value="NC_002528.1"/>
</dbReference>
<dbReference type="SMR" id="P57266"/>
<dbReference type="STRING" id="563178.BUAP5A_166"/>
<dbReference type="EnsemblBacteria" id="BAB12886">
    <property type="protein sequence ID" value="BAB12886"/>
    <property type="gene ID" value="BAB12886"/>
</dbReference>
<dbReference type="KEGG" id="buc:BU169"/>
<dbReference type="PATRIC" id="fig|107806.10.peg.180"/>
<dbReference type="eggNOG" id="COG0462">
    <property type="taxonomic scope" value="Bacteria"/>
</dbReference>
<dbReference type="HOGENOM" id="CLU_033546_2_0_6"/>
<dbReference type="UniPathway" id="UPA00087">
    <property type="reaction ID" value="UER00172"/>
</dbReference>
<dbReference type="Proteomes" id="UP000001806">
    <property type="component" value="Chromosome"/>
</dbReference>
<dbReference type="GO" id="GO:0005737">
    <property type="term" value="C:cytoplasm"/>
    <property type="evidence" value="ECO:0007669"/>
    <property type="project" value="UniProtKB-SubCell"/>
</dbReference>
<dbReference type="GO" id="GO:0002189">
    <property type="term" value="C:ribose phosphate diphosphokinase complex"/>
    <property type="evidence" value="ECO:0007669"/>
    <property type="project" value="TreeGrafter"/>
</dbReference>
<dbReference type="GO" id="GO:0005524">
    <property type="term" value="F:ATP binding"/>
    <property type="evidence" value="ECO:0007669"/>
    <property type="project" value="UniProtKB-KW"/>
</dbReference>
<dbReference type="GO" id="GO:0016301">
    <property type="term" value="F:kinase activity"/>
    <property type="evidence" value="ECO:0007669"/>
    <property type="project" value="UniProtKB-KW"/>
</dbReference>
<dbReference type="GO" id="GO:0000287">
    <property type="term" value="F:magnesium ion binding"/>
    <property type="evidence" value="ECO:0007669"/>
    <property type="project" value="UniProtKB-UniRule"/>
</dbReference>
<dbReference type="GO" id="GO:0004749">
    <property type="term" value="F:ribose phosphate diphosphokinase activity"/>
    <property type="evidence" value="ECO:0007669"/>
    <property type="project" value="UniProtKB-UniRule"/>
</dbReference>
<dbReference type="GO" id="GO:0006015">
    <property type="term" value="P:5-phosphoribose 1-diphosphate biosynthetic process"/>
    <property type="evidence" value="ECO:0007669"/>
    <property type="project" value="UniProtKB-UniRule"/>
</dbReference>
<dbReference type="GO" id="GO:0006164">
    <property type="term" value="P:purine nucleotide biosynthetic process"/>
    <property type="evidence" value="ECO:0007669"/>
    <property type="project" value="TreeGrafter"/>
</dbReference>
<dbReference type="GO" id="GO:0009156">
    <property type="term" value="P:ribonucleoside monophosphate biosynthetic process"/>
    <property type="evidence" value="ECO:0007669"/>
    <property type="project" value="InterPro"/>
</dbReference>
<dbReference type="CDD" id="cd06223">
    <property type="entry name" value="PRTases_typeI"/>
    <property type="match status" value="1"/>
</dbReference>
<dbReference type="FunFam" id="3.40.50.2020:FF:000001">
    <property type="entry name" value="Ribose-phosphate pyrophosphokinase"/>
    <property type="match status" value="1"/>
</dbReference>
<dbReference type="Gene3D" id="3.40.50.2020">
    <property type="match status" value="2"/>
</dbReference>
<dbReference type="HAMAP" id="MF_00583_B">
    <property type="entry name" value="RibP_PPkinase_B"/>
    <property type="match status" value="1"/>
</dbReference>
<dbReference type="InterPro" id="IPR000842">
    <property type="entry name" value="PRib_PP_synth_CS"/>
</dbReference>
<dbReference type="InterPro" id="IPR029099">
    <property type="entry name" value="Pribosyltran_N"/>
</dbReference>
<dbReference type="InterPro" id="IPR000836">
    <property type="entry name" value="PRibTrfase_dom"/>
</dbReference>
<dbReference type="InterPro" id="IPR029057">
    <property type="entry name" value="PRTase-like"/>
</dbReference>
<dbReference type="InterPro" id="IPR005946">
    <property type="entry name" value="Rib-P_diPkinase"/>
</dbReference>
<dbReference type="InterPro" id="IPR037515">
    <property type="entry name" value="Rib-P_diPkinase_bac"/>
</dbReference>
<dbReference type="NCBIfam" id="NF002320">
    <property type="entry name" value="PRK01259.1"/>
    <property type="match status" value="1"/>
</dbReference>
<dbReference type="NCBIfam" id="TIGR01251">
    <property type="entry name" value="ribP_PPkin"/>
    <property type="match status" value="1"/>
</dbReference>
<dbReference type="PANTHER" id="PTHR10210">
    <property type="entry name" value="RIBOSE-PHOSPHATE DIPHOSPHOKINASE FAMILY MEMBER"/>
    <property type="match status" value="1"/>
</dbReference>
<dbReference type="PANTHER" id="PTHR10210:SF41">
    <property type="entry name" value="RIBOSE-PHOSPHATE PYROPHOSPHOKINASE 1, CHLOROPLASTIC"/>
    <property type="match status" value="1"/>
</dbReference>
<dbReference type="Pfam" id="PF14572">
    <property type="entry name" value="Pribosyl_synth"/>
    <property type="match status" value="1"/>
</dbReference>
<dbReference type="Pfam" id="PF13793">
    <property type="entry name" value="Pribosyltran_N"/>
    <property type="match status" value="1"/>
</dbReference>
<dbReference type="SMART" id="SM01400">
    <property type="entry name" value="Pribosyltran_N"/>
    <property type="match status" value="1"/>
</dbReference>
<dbReference type="SUPFAM" id="SSF53271">
    <property type="entry name" value="PRTase-like"/>
    <property type="match status" value="1"/>
</dbReference>
<dbReference type="PROSITE" id="PS00114">
    <property type="entry name" value="PRPP_SYNTHASE"/>
    <property type="match status" value="1"/>
</dbReference>